<dbReference type="EC" id="2.7.1.148" evidence="1"/>
<dbReference type="EMBL" id="CP000924">
    <property type="protein sequence ID" value="ABY93849.1"/>
    <property type="molecule type" value="Genomic_DNA"/>
</dbReference>
<dbReference type="RefSeq" id="WP_012268910.1">
    <property type="nucleotide sequence ID" value="NC_010321.1"/>
</dbReference>
<dbReference type="SMR" id="B0KBH0"/>
<dbReference type="STRING" id="340099.Teth39_0176"/>
<dbReference type="KEGG" id="tpd:Teth39_0176"/>
<dbReference type="eggNOG" id="COG1947">
    <property type="taxonomic scope" value="Bacteria"/>
</dbReference>
<dbReference type="HOGENOM" id="CLU_053057_1_1_9"/>
<dbReference type="UniPathway" id="UPA00056">
    <property type="reaction ID" value="UER00094"/>
</dbReference>
<dbReference type="Proteomes" id="UP000002156">
    <property type="component" value="Chromosome"/>
</dbReference>
<dbReference type="GO" id="GO:0050515">
    <property type="term" value="F:4-(cytidine 5'-diphospho)-2-C-methyl-D-erythritol kinase activity"/>
    <property type="evidence" value="ECO:0007669"/>
    <property type="project" value="UniProtKB-UniRule"/>
</dbReference>
<dbReference type="GO" id="GO:0005524">
    <property type="term" value="F:ATP binding"/>
    <property type="evidence" value="ECO:0007669"/>
    <property type="project" value="UniProtKB-UniRule"/>
</dbReference>
<dbReference type="GO" id="GO:0019288">
    <property type="term" value="P:isopentenyl diphosphate biosynthetic process, methylerythritol 4-phosphate pathway"/>
    <property type="evidence" value="ECO:0007669"/>
    <property type="project" value="UniProtKB-UniRule"/>
</dbReference>
<dbReference type="GO" id="GO:0016114">
    <property type="term" value="P:terpenoid biosynthetic process"/>
    <property type="evidence" value="ECO:0007669"/>
    <property type="project" value="InterPro"/>
</dbReference>
<dbReference type="Gene3D" id="3.30.230.10">
    <property type="match status" value="1"/>
</dbReference>
<dbReference type="Gene3D" id="3.30.70.890">
    <property type="entry name" value="GHMP kinase, C-terminal domain"/>
    <property type="match status" value="1"/>
</dbReference>
<dbReference type="HAMAP" id="MF_00061">
    <property type="entry name" value="IspE"/>
    <property type="match status" value="1"/>
</dbReference>
<dbReference type="InterPro" id="IPR013750">
    <property type="entry name" value="GHMP_kinase_C_dom"/>
</dbReference>
<dbReference type="InterPro" id="IPR036554">
    <property type="entry name" value="GHMP_kinase_C_sf"/>
</dbReference>
<dbReference type="InterPro" id="IPR006204">
    <property type="entry name" value="GHMP_kinase_N_dom"/>
</dbReference>
<dbReference type="InterPro" id="IPR004424">
    <property type="entry name" value="IspE"/>
</dbReference>
<dbReference type="InterPro" id="IPR020568">
    <property type="entry name" value="Ribosomal_Su5_D2-typ_SF"/>
</dbReference>
<dbReference type="InterPro" id="IPR014721">
    <property type="entry name" value="Ribsml_uS5_D2-typ_fold_subgr"/>
</dbReference>
<dbReference type="NCBIfam" id="TIGR00154">
    <property type="entry name" value="ispE"/>
    <property type="match status" value="1"/>
</dbReference>
<dbReference type="NCBIfam" id="NF011202">
    <property type="entry name" value="PRK14608.1"/>
    <property type="match status" value="1"/>
</dbReference>
<dbReference type="PANTHER" id="PTHR43527">
    <property type="entry name" value="4-DIPHOSPHOCYTIDYL-2-C-METHYL-D-ERYTHRITOL KINASE, CHLOROPLASTIC"/>
    <property type="match status" value="1"/>
</dbReference>
<dbReference type="PANTHER" id="PTHR43527:SF2">
    <property type="entry name" value="4-DIPHOSPHOCYTIDYL-2-C-METHYL-D-ERYTHRITOL KINASE, CHLOROPLASTIC"/>
    <property type="match status" value="1"/>
</dbReference>
<dbReference type="Pfam" id="PF08544">
    <property type="entry name" value="GHMP_kinases_C"/>
    <property type="match status" value="1"/>
</dbReference>
<dbReference type="Pfam" id="PF00288">
    <property type="entry name" value="GHMP_kinases_N"/>
    <property type="match status" value="1"/>
</dbReference>
<dbReference type="PIRSF" id="PIRSF010376">
    <property type="entry name" value="IspE"/>
    <property type="match status" value="1"/>
</dbReference>
<dbReference type="SUPFAM" id="SSF55060">
    <property type="entry name" value="GHMP Kinase, C-terminal domain"/>
    <property type="match status" value="1"/>
</dbReference>
<dbReference type="SUPFAM" id="SSF54211">
    <property type="entry name" value="Ribosomal protein S5 domain 2-like"/>
    <property type="match status" value="1"/>
</dbReference>
<keyword id="KW-0067">ATP-binding</keyword>
<keyword id="KW-0414">Isoprene biosynthesis</keyword>
<keyword id="KW-0418">Kinase</keyword>
<keyword id="KW-0547">Nucleotide-binding</keyword>
<keyword id="KW-1185">Reference proteome</keyword>
<keyword id="KW-0808">Transferase</keyword>
<sequence>MKKIKVKAYAKINLSLDVLGKREDGYHEISTIMQSIDLADILEFEKSEIVKVFCNDHRVPLGEDNLIVKVINLLKEKYQMEEGVLVKLDKRIPLAAGLAGGSADAAATIVALDKLWNLNMSKEEKKEIALKVGADVPFCLEGGTKLAKGIGEIFEDLKITSMNLLLVKPDIEISTKEIYDKWDRLNFKSHHATVPVVQAIQEGNIYKIAENIKNDLELVTSQKYGIINKIKEELLKKGALGCAMSGSGPTVYGIFDDLEKLRKAYEDLKEVYSFVFFSKTIDKGLELYE</sequence>
<protein>
    <recommendedName>
        <fullName evidence="1">4-diphosphocytidyl-2-C-methyl-D-erythritol kinase</fullName>
        <shortName evidence="1">CMK</shortName>
        <ecNumber evidence="1">2.7.1.148</ecNumber>
    </recommendedName>
    <alternativeName>
        <fullName evidence="1">4-(cytidine-5'-diphospho)-2-C-methyl-D-erythritol kinase</fullName>
    </alternativeName>
</protein>
<name>ISPE_THEP3</name>
<feature type="chain" id="PRO_1000202387" description="4-diphosphocytidyl-2-C-methyl-D-erythritol kinase">
    <location>
        <begin position="1"/>
        <end position="289"/>
    </location>
</feature>
<feature type="active site" evidence="1">
    <location>
        <position position="11"/>
    </location>
</feature>
<feature type="active site" evidence="1">
    <location>
        <position position="135"/>
    </location>
</feature>
<feature type="binding site" evidence="1">
    <location>
        <begin position="93"/>
        <end position="103"/>
    </location>
    <ligand>
        <name>ATP</name>
        <dbReference type="ChEBI" id="CHEBI:30616"/>
    </ligand>
</feature>
<proteinExistence type="inferred from homology"/>
<organism>
    <name type="scientific">Thermoanaerobacter pseudethanolicus (strain ATCC 33223 / 39E)</name>
    <name type="common">Clostridium thermohydrosulfuricum</name>
    <dbReference type="NCBI Taxonomy" id="340099"/>
    <lineage>
        <taxon>Bacteria</taxon>
        <taxon>Bacillati</taxon>
        <taxon>Bacillota</taxon>
        <taxon>Clostridia</taxon>
        <taxon>Thermoanaerobacterales</taxon>
        <taxon>Thermoanaerobacteraceae</taxon>
        <taxon>Thermoanaerobacter</taxon>
    </lineage>
</organism>
<gene>
    <name evidence="1" type="primary">ispE</name>
    <name type="ordered locus">Teth39_0176</name>
</gene>
<reference key="1">
    <citation type="submission" date="2008-01" db="EMBL/GenBank/DDBJ databases">
        <title>Complete sequence of Thermoanaerobacter pseudethanolicus 39E.</title>
        <authorList>
            <person name="Copeland A."/>
            <person name="Lucas S."/>
            <person name="Lapidus A."/>
            <person name="Barry K."/>
            <person name="Glavina del Rio T."/>
            <person name="Dalin E."/>
            <person name="Tice H."/>
            <person name="Pitluck S."/>
            <person name="Bruce D."/>
            <person name="Goodwin L."/>
            <person name="Saunders E."/>
            <person name="Brettin T."/>
            <person name="Detter J.C."/>
            <person name="Han C."/>
            <person name="Schmutz J."/>
            <person name="Larimer F."/>
            <person name="Land M."/>
            <person name="Hauser L."/>
            <person name="Kyrpides N."/>
            <person name="Lykidis A."/>
            <person name="Hemme C."/>
            <person name="Fields M.W."/>
            <person name="He Z."/>
            <person name="Zhou J."/>
            <person name="Richardson P."/>
        </authorList>
    </citation>
    <scope>NUCLEOTIDE SEQUENCE [LARGE SCALE GENOMIC DNA]</scope>
    <source>
        <strain>ATCC 33223 / DSM 2355 / 39E</strain>
    </source>
</reference>
<accession>B0KBH0</accession>
<comment type="function">
    <text evidence="1">Catalyzes the phosphorylation of the position 2 hydroxy group of 4-diphosphocytidyl-2C-methyl-D-erythritol.</text>
</comment>
<comment type="catalytic activity">
    <reaction evidence="1">
        <text>4-CDP-2-C-methyl-D-erythritol + ATP = 4-CDP-2-C-methyl-D-erythritol 2-phosphate + ADP + H(+)</text>
        <dbReference type="Rhea" id="RHEA:18437"/>
        <dbReference type="ChEBI" id="CHEBI:15378"/>
        <dbReference type="ChEBI" id="CHEBI:30616"/>
        <dbReference type="ChEBI" id="CHEBI:57823"/>
        <dbReference type="ChEBI" id="CHEBI:57919"/>
        <dbReference type="ChEBI" id="CHEBI:456216"/>
        <dbReference type="EC" id="2.7.1.148"/>
    </reaction>
</comment>
<comment type="pathway">
    <text evidence="1">Isoprenoid biosynthesis; isopentenyl diphosphate biosynthesis via DXP pathway; isopentenyl diphosphate from 1-deoxy-D-xylulose 5-phosphate: step 3/6.</text>
</comment>
<comment type="similarity">
    <text evidence="1">Belongs to the GHMP kinase family. IspE subfamily.</text>
</comment>
<evidence type="ECO:0000255" key="1">
    <source>
        <dbReference type="HAMAP-Rule" id="MF_00061"/>
    </source>
</evidence>